<gene>
    <name type="primary">bcl7a</name>
    <name type="ORF">TGas097k12.1</name>
</gene>
<name>BCL7A_XENTR</name>
<evidence type="ECO:0000256" key="1">
    <source>
        <dbReference type="SAM" id="MobiDB-lite"/>
    </source>
</evidence>
<evidence type="ECO:0000305" key="2"/>
<sequence length="231" mass="25145">MSGRSVRAETRSRAKDDIKRVMAAIEKVRKWEKKWVTVGDTSLRIYKWVPVTEPKVDDIDLKVTDENSGLLRRPKPNAKKTKNKKKTKDDKCGSELTTPENSSSPGMMDMNDDNSNQSSIADASPVKQENSSTCSPAPDQNVSAQPEGSEVKLEESHSNASEQQDSEVSSGQNSHSSIESSLNSSEKAETQTSGDKEITVEASKNSQDSDDGTPPCKKVKGDSSQPNNDGI</sequence>
<proteinExistence type="evidence at transcript level"/>
<accession>Q6DEV7</accession>
<comment type="similarity">
    <text evidence="2">Belongs to the BCL7 family.</text>
</comment>
<organism>
    <name type="scientific">Xenopus tropicalis</name>
    <name type="common">Western clawed frog</name>
    <name type="synonym">Silurana tropicalis</name>
    <dbReference type="NCBI Taxonomy" id="8364"/>
    <lineage>
        <taxon>Eukaryota</taxon>
        <taxon>Metazoa</taxon>
        <taxon>Chordata</taxon>
        <taxon>Craniata</taxon>
        <taxon>Vertebrata</taxon>
        <taxon>Euteleostomi</taxon>
        <taxon>Amphibia</taxon>
        <taxon>Batrachia</taxon>
        <taxon>Anura</taxon>
        <taxon>Pipoidea</taxon>
        <taxon>Pipidae</taxon>
        <taxon>Xenopodinae</taxon>
        <taxon>Xenopus</taxon>
        <taxon>Silurana</taxon>
    </lineage>
</organism>
<keyword id="KW-1185">Reference proteome</keyword>
<protein>
    <recommendedName>
        <fullName>B-cell CLL/lymphoma 7 protein family member A</fullName>
    </recommendedName>
</protein>
<reference key="1">
    <citation type="submission" date="2006-03" db="EMBL/GenBank/DDBJ databases">
        <authorList>
            <consortium name="Sanger Xenopus tropicalis EST/cDNA project"/>
        </authorList>
    </citation>
    <scope>NUCLEOTIDE SEQUENCE [LARGE SCALE MRNA]</scope>
    <source>
        <tissue>Gastrula</tissue>
    </source>
</reference>
<reference key="2">
    <citation type="submission" date="2004-07" db="EMBL/GenBank/DDBJ databases">
        <authorList>
            <consortium name="NIH - Xenopus Gene Collection (XGC) project"/>
        </authorList>
    </citation>
    <scope>NUCLEOTIDE SEQUENCE [LARGE SCALE MRNA]</scope>
    <source>
        <tissue>Embryo</tissue>
    </source>
</reference>
<dbReference type="EMBL" id="CR926398">
    <property type="protein sequence ID" value="CAJ83378.1"/>
    <property type="molecule type" value="mRNA"/>
</dbReference>
<dbReference type="EMBL" id="BC076987">
    <property type="protein sequence ID" value="AAH76987.1"/>
    <property type="molecule type" value="mRNA"/>
</dbReference>
<dbReference type="RefSeq" id="NP_001006872.1">
    <property type="nucleotide sequence ID" value="NM_001006871.1"/>
</dbReference>
<dbReference type="FunCoup" id="Q6DEV7">
    <property type="interactions" value="755"/>
</dbReference>
<dbReference type="STRING" id="8364.ENSXETP00000017264"/>
<dbReference type="PaxDb" id="8364-ENSXETP00000008176"/>
<dbReference type="GeneID" id="448642"/>
<dbReference type="KEGG" id="xtr:448642"/>
<dbReference type="AGR" id="Xenbase:XB-GENE-5754603"/>
<dbReference type="CTD" id="605"/>
<dbReference type="Xenbase" id="XB-GENE-5754603">
    <property type="gene designation" value="bcl7a"/>
</dbReference>
<dbReference type="eggNOG" id="KOG4095">
    <property type="taxonomic scope" value="Eukaryota"/>
</dbReference>
<dbReference type="HOGENOM" id="CLU_110835_0_0_1"/>
<dbReference type="InParanoid" id="Q6DEV7"/>
<dbReference type="OMA" id="NASHREN"/>
<dbReference type="OrthoDB" id="5989898at2759"/>
<dbReference type="PhylomeDB" id="Q6DEV7"/>
<dbReference type="TreeFam" id="TF317441"/>
<dbReference type="Proteomes" id="UP000008143">
    <property type="component" value="Chromosome 1"/>
</dbReference>
<dbReference type="ExpressionAtlas" id="Q6DEV7">
    <property type="expression patterns" value="baseline"/>
</dbReference>
<dbReference type="InterPro" id="IPR006804">
    <property type="entry name" value="BCL7"/>
</dbReference>
<dbReference type="PANTHER" id="PTHR12767:SF11">
    <property type="entry name" value="B-CELL CLL_LYMPHOMA 7 PROTEIN FAMILY MEMBER A"/>
    <property type="match status" value="1"/>
</dbReference>
<dbReference type="PANTHER" id="PTHR12767">
    <property type="entry name" value="BCL7 RELATED"/>
    <property type="match status" value="1"/>
</dbReference>
<dbReference type="Pfam" id="PF04714">
    <property type="entry name" value="BCL_N"/>
    <property type="match status" value="1"/>
</dbReference>
<feature type="chain" id="PRO_0000239827" description="B-cell CLL/lymphoma 7 protein family member A">
    <location>
        <begin position="1"/>
        <end position="231"/>
    </location>
</feature>
<feature type="region of interest" description="Disordered" evidence="1">
    <location>
        <begin position="62"/>
        <end position="231"/>
    </location>
</feature>
<feature type="compositionally biased region" description="Basic residues" evidence="1">
    <location>
        <begin position="72"/>
        <end position="86"/>
    </location>
</feature>
<feature type="compositionally biased region" description="Polar residues" evidence="1">
    <location>
        <begin position="95"/>
        <end position="105"/>
    </location>
</feature>
<feature type="compositionally biased region" description="Polar residues" evidence="1">
    <location>
        <begin position="113"/>
        <end position="146"/>
    </location>
</feature>
<feature type="compositionally biased region" description="Polar residues" evidence="1">
    <location>
        <begin position="158"/>
        <end position="173"/>
    </location>
</feature>
<feature type="compositionally biased region" description="Low complexity" evidence="1">
    <location>
        <begin position="174"/>
        <end position="185"/>
    </location>
</feature>
<feature type="compositionally biased region" description="Basic and acidic residues" evidence="1">
    <location>
        <begin position="186"/>
        <end position="199"/>
    </location>
</feature>
<feature type="compositionally biased region" description="Polar residues" evidence="1">
    <location>
        <begin position="222"/>
        <end position="231"/>
    </location>
</feature>